<proteinExistence type="inferred from homology"/>
<name>RSMG_STAAW</name>
<comment type="function">
    <text evidence="1">Specifically methylates the N7 position of guanine in position 535 of 16S rRNA.</text>
</comment>
<comment type="subcellular location">
    <subcellularLocation>
        <location evidence="1">Cytoplasm</location>
    </subcellularLocation>
</comment>
<comment type="similarity">
    <text evidence="1">Belongs to the methyltransferase superfamily. RNA methyltransferase RsmG family.</text>
</comment>
<dbReference type="EC" id="2.1.1.-" evidence="1"/>
<dbReference type="EMBL" id="BA000033">
    <property type="protein sequence ID" value="BAB96493.1"/>
    <property type="molecule type" value="Genomic_DNA"/>
</dbReference>
<dbReference type="RefSeq" id="WP_000215595.1">
    <property type="nucleotide sequence ID" value="NC_003923.1"/>
</dbReference>
<dbReference type="SMR" id="Q8NUF9"/>
<dbReference type="KEGG" id="sam:MW2628"/>
<dbReference type="HOGENOM" id="CLU_065341_0_0_9"/>
<dbReference type="GO" id="GO:0005829">
    <property type="term" value="C:cytosol"/>
    <property type="evidence" value="ECO:0007669"/>
    <property type="project" value="TreeGrafter"/>
</dbReference>
<dbReference type="GO" id="GO:0070043">
    <property type="term" value="F:rRNA (guanine-N7-)-methyltransferase activity"/>
    <property type="evidence" value="ECO:0007669"/>
    <property type="project" value="UniProtKB-UniRule"/>
</dbReference>
<dbReference type="CDD" id="cd02440">
    <property type="entry name" value="AdoMet_MTases"/>
    <property type="match status" value="1"/>
</dbReference>
<dbReference type="FunFam" id="3.40.50.150:FF:000041">
    <property type="entry name" value="Ribosomal RNA small subunit methyltransferase G"/>
    <property type="match status" value="1"/>
</dbReference>
<dbReference type="Gene3D" id="3.40.50.150">
    <property type="entry name" value="Vaccinia Virus protein VP39"/>
    <property type="match status" value="1"/>
</dbReference>
<dbReference type="HAMAP" id="MF_00074">
    <property type="entry name" value="16SrRNA_methyltr_G"/>
    <property type="match status" value="1"/>
</dbReference>
<dbReference type="InterPro" id="IPR003682">
    <property type="entry name" value="rRNA_ssu_MeTfrase_G"/>
</dbReference>
<dbReference type="InterPro" id="IPR029063">
    <property type="entry name" value="SAM-dependent_MTases_sf"/>
</dbReference>
<dbReference type="NCBIfam" id="TIGR00138">
    <property type="entry name" value="rsmG_gidB"/>
    <property type="match status" value="1"/>
</dbReference>
<dbReference type="PANTHER" id="PTHR31760">
    <property type="entry name" value="S-ADENOSYL-L-METHIONINE-DEPENDENT METHYLTRANSFERASES SUPERFAMILY PROTEIN"/>
    <property type="match status" value="1"/>
</dbReference>
<dbReference type="PANTHER" id="PTHR31760:SF0">
    <property type="entry name" value="S-ADENOSYL-L-METHIONINE-DEPENDENT METHYLTRANSFERASES SUPERFAMILY PROTEIN"/>
    <property type="match status" value="1"/>
</dbReference>
<dbReference type="Pfam" id="PF02527">
    <property type="entry name" value="GidB"/>
    <property type="match status" value="1"/>
</dbReference>
<dbReference type="PIRSF" id="PIRSF003078">
    <property type="entry name" value="GidB"/>
    <property type="match status" value="1"/>
</dbReference>
<dbReference type="SUPFAM" id="SSF53335">
    <property type="entry name" value="S-adenosyl-L-methionine-dependent methyltransferases"/>
    <property type="match status" value="1"/>
</dbReference>
<reference key="1">
    <citation type="journal article" date="2002" name="Lancet">
        <title>Genome and virulence determinants of high virulence community-acquired MRSA.</title>
        <authorList>
            <person name="Baba T."/>
            <person name="Takeuchi F."/>
            <person name="Kuroda M."/>
            <person name="Yuzawa H."/>
            <person name="Aoki K."/>
            <person name="Oguchi A."/>
            <person name="Nagai Y."/>
            <person name="Iwama N."/>
            <person name="Asano K."/>
            <person name="Naimi T."/>
            <person name="Kuroda H."/>
            <person name="Cui L."/>
            <person name="Yamamoto K."/>
            <person name="Hiramatsu K."/>
        </authorList>
    </citation>
    <scope>NUCLEOTIDE SEQUENCE [LARGE SCALE GENOMIC DNA]</scope>
    <source>
        <strain>MW2</strain>
    </source>
</reference>
<evidence type="ECO:0000255" key="1">
    <source>
        <dbReference type="HAMAP-Rule" id="MF_00074"/>
    </source>
</evidence>
<evidence type="ECO:0000256" key="2">
    <source>
        <dbReference type="SAM" id="MobiDB-lite"/>
    </source>
</evidence>
<protein>
    <recommendedName>
        <fullName evidence="1">Ribosomal RNA small subunit methyltransferase G</fullName>
        <ecNumber evidence="1">2.1.1.-</ecNumber>
    </recommendedName>
    <alternativeName>
        <fullName evidence="1">16S rRNA 7-methylguanosine methyltransferase</fullName>
        <shortName evidence="1">16S rRNA m7G methyltransferase</shortName>
    </alternativeName>
</protein>
<feature type="chain" id="PRO_0000184332" description="Ribosomal RNA small subunit methyltransferase G">
    <location>
        <begin position="1"/>
        <end position="239"/>
    </location>
</feature>
<feature type="region of interest" description="Disordered" evidence="2">
    <location>
        <begin position="215"/>
        <end position="239"/>
    </location>
</feature>
<feature type="binding site" evidence="1">
    <location>
        <position position="77"/>
    </location>
    <ligand>
        <name>S-adenosyl-L-methionine</name>
        <dbReference type="ChEBI" id="CHEBI:59789"/>
    </ligand>
</feature>
<feature type="binding site" evidence="1">
    <location>
        <position position="82"/>
    </location>
    <ligand>
        <name>S-adenosyl-L-methionine</name>
        <dbReference type="ChEBI" id="CHEBI:59789"/>
    </ligand>
</feature>
<feature type="binding site" evidence="1">
    <location>
        <begin position="128"/>
        <end position="129"/>
    </location>
    <ligand>
        <name>S-adenosyl-L-methionine</name>
        <dbReference type="ChEBI" id="CHEBI:59789"/>
    </ligand>
</feature>
<feature type="binding site" evidence="1">
    <location>
        <position position="146"/>
    </location>
    <ligand>
        <name>S-adenosyl-L-methionine</name>
        <dbReference type="ChEBI" id="CHEBI:59789"/>
    </ligand>
</feature>
<keyword id="KW-0963">Cytoplasm</keyword>
<keyword id="KW-0489">Methyltransferase</keyword>
<keyword id="KW-0698">rRNA processing</keyword>
<keyword id="KW-0949">S-adenosyl-L-methionine</keyword>
<keyword id="KW-0808">Transferase</keyword>
<accession>Q8NUF9</accession>
<gene>
    <name evidence="1" type="primary">rsmG</name>
    <name type="ordered locus">MW2628</name>
</gene>
<sequence length="239" mass="27359">MTVEWLAEQLKEHNIQLTETQKQQFQTYYRLLVEWNEKMNLTSITDEHDVYLKHFYDSIAPSFYFDFNQPISICDVGAGAGFPSIPLKIMFPQLKVTIVDSLNKRIQFLNHLASELQLQDVSFIHDRAETFGKGVYRESYDVVTARAVARLSVLSELCLPLVKKGGQFVALKSSKGEEELEEAKFAISVLGGNVTETHTFELPEDAGERQMFIIDKKRQTPKKYPRKPGTPNKTPLLEK</sequence>
<organism>
    <name type="scientific">Staphylococcus aureus (strain MW2)</name>
    <dbReference type="NCBI Taxonomy" id="196620"/>
    <lineage>
        <taxon>Bacteria</taxon>
        <taxon>Bacillati</taxon>
        <taxon>Bacillota</taxon>
        <taxon>Bacilli</taxon>
        <taxon>Bacillales</taxon>
        <taxon>Staphylococcaceae</taxon>
        <taxon>Staphylococcus</taxon>
    </lineage>
</organism>